<evidence type="ECO:0000250" key="1">
    <source>
        <dbReference type="UniProtKB" id="P00426"/>
    </source>
</evidence>
<evidence type="ECO:0000250" key="2">
    <source>
        <dbReference type="UniProtKB" id="P00427"/>
    </source>
</evidence>
<evidence type="ECO:0000250" key="3">
    <source>
        <dbReference type="UniProtKB" id="P20674"/>
    </source>
</evidence>
<evidence type="ECO:0000305" key="4"/>
<protein>
    <recommendedName>
        <fullName>Cytochrome c oxidase subunit 5A-1, mitochondrial</fullName>
    </recommendedName>
    <alternativeName>
        <fullName>Cytochrome c oxidase polypeptide Va-1</fullName>
    </alternativeName>
</protein>
<sequence length="20" mass="2404">SHGKVETDEEFDARWVTYFS</sequence>
<comment type="function">
    <text evidence="2">Component of the cytochrome c oxidase, the last enzyme in the mitochondrial electron transport chain which drives oxidative phosphorylation. The respiratory chain contains 3 multisubunit complexes succinate dehydrogenase (complex II, CII), ubiquinol-cytochrome c oxidoreductase (cytochrome b-c1 complex, complex III, CIII) and cytochrome c oxidase (complex IV, CIV), that cooperate to transfer electrons derived from NADH and succinate to molecular oxygen, creating an electrochemical gradient over the inner membrane that drives transmembrane transport and the ATP synthase. Cytochrome c oxidase is the component of the respiratory chain that catalyzes the reduction of oxygen to water. Electrons originating from reduced cytochrome c in the intermembrane space (IMS) are transferred via the dinuclear copper A center (CU(A)) of subunit 2 and heme A of subunit 1 to the active site in subunit 1, a binuclear center (BNC) formed by heme A3 and copper B (CU(B)). The BNC reduces molecular oxygen to 2 water molecules using 4 electrons from cytochrome c in the IMS and 4 protons from the mitochondrial matrix.</text>
</comment>
<comment type="pathway">
    <text evidence="2">Energy metabolism; oxidative phosphorylation.</text>
</comment>
<comment type="subunit">
    <text evidence="1 3">Component of the cytochrome c oxidase (complex IV, CIV), a multisubunit enzyme composed of 14 subunits. The complex is composed of a catalytic core of 3 subunits MT-CO1, MT-CO2 and MT-CO3, encoded in the mitochondrial DNA, and 11 supernumerary subunits COX4I, COX5A, COX5B, COX6A, COX6B, COX6C, COX7A, COX7B, COX7C, COX8 and NDUFA4, which are encoded in the nuclear genome. The complex exists as a monomer or a dimer and forms supercomplexes (SCs) in the inner mitochondrial membrane with NADH-ubiquinone oxidoreductase (complex I, CI) and ubiquinol-cytochrome c oxidoreductase (cytochrome b-c1 complex, complex III, CIII), resulting in different assemblies (supercomplex SCI(1)III(2)IV(1) and megacomplex MCI(2)III(2)IV(2)) (By similarity). Interacts with AFG1L (By similarity). Interacts with RAB5IF (By similarity).</text>
</comment>
<comment type="subcellular location">
    <subcellularLocation>
        <location evidence="1">Mitochondrion inner membrane</location>
        <topology evidence="1">Peripheral membrane protein</topology>
        <orientation evidence="1">Matrix side</orientation>
    </subcellularLocation>
</comment>
<comment type="similarity">
    <text evidence="4">Belongs to the cytochrome c oxidase subunit 5A family.</text>
</comment>
<proteinExistence type="evidence at protein level"/>
<name>COX5A_THUOB</name>
<organism>
    <name type="scientific">Thunnus obesus</name>
    <name type="common">Bigeye tuna</name>
    <dbReference type="NCBI Taxonomy" id="8241"/>
    <lineage>
        <taxon>Eukaryota</taxon>
        <taxon>Metazoa</taxon>
        <taxon>Chordata</taxon>
        <taxon>Craniata</taxon>
        <taxon>Vertebrata</taxon>
        <taxon>Euteleostomi</taxon>
        <taxon>Actinopterygii</taxon>
        <taxon>Neopterygii</taxon>
        <taxon>Teleostei</taxon>
        <taxon>Neoteleostei</taxon>
        <taxon>Acanthomorphata</taxon>
        <taxon>Pelagiaria</taxon>
        <taxon>Scombriformes</taxon>
        <taxon>Scombridae</taxon>
        <taxon>Thunnus</taxon>
    </lineage>
</organism>
<accession>P80972</accession>
<feature type="chain" id="PRO_0000195216" description="Cytochrome c oxidase subunit 5A-1, mitochondrial">
    <location>
        <begin position="1"/>
        <end position="20" status="greater than"/>
    </location>
</feature>
<feature type="non-terminal residue">
    <location>
        <position position="20"/>
    </location>
</feature>
<keyword id="KW-0903">Direct protein sequencing</keyword>
<keyword id="KW-0349">Heme</keyword>
<keyword id="KW-0408">Iron</keyword>
<keyword id="KW-0472">Membrane</keyword>
<keyword id="KW-0479">Metal-binding</keyword>
<keyword id="KW-0496">Mitochondrion</keyword>
<keyword id="KW-0999">Mitochondrion inner membrane</keyword>
<dbReference type="PIR" id="S77981">
    <property type="entry name" value="S77981"/>
</dbReference>
<dbReference type="UniPathway" id="UPA00705"/>
<dbReference type="GO" id="GO:0005743">
    <property type="term" value="C:mitochondrial inner membrane"/>
    <property type="evidence" value="ECO:0007669"/>
    <property type="project" value="UniProtKB-SubCell"/>
</dbReference>
<dbReference type="GO" id="GO:0046872">
    <property type="term" value="F:metal ion binding"/>
    <property type="evidence" value="ECO:0007669"/>
    <property type="project" value="UniProtKB-KW"/>
</dbReference>
<dbReference type="GO" id="GO:0006119">
    <property type="term" value="P:oxidative phosphorylation"/>
    <property type="evidence" value="ECO:0007669"/>
    <property type="project" value="UniProtKB-UniPathway"/>
</dbReference>
<reference key="1">
    <citation type="journal article" date="1997" name="Eur. J. Biochem.">
        <title>The subunit structure of cytochrome-c oxidase from tuna heart and liver.</title>
        <authorList>
            <person name="Arnold S."/>
            <person name="Lee I."/>
            <person name="Kim M."/>
            <person name="Song E."/>
            <person name="Linder D."/>
            <person name="Lottspeich F."/>
            <person name="Kadenbach B."/>
        </authorList>
    </citation>
    <scope>PROTEIN SEQUENCE</scope>
    <source>
        <tissue>Heart</tissue>
        <tissue>Liver</tissue>
    </source>
</reference>